<reference key="1">
    <citation type="journal article" date="1995" name="Gene">
        <title>Isolation of a cDNA encoding a novel chicken chemokine homologous to mammalian macrophage inflammatory protein-1 beta.</title>
        <authorList>
            <person name="Petrenko O."/>
            <person name="Ischenko I."/>
            <person name="Enrietto P.J."/>
        </authorList>
    </citation>
    <scope>NUCLEOTIDE SEQUENCE [MRNA]</scope>
    <source>
        <tissue>Bone marrow</tissue>
    </source>
</reference>
<reference key="2">
    <citation type="journal article" date="1999" name="Anim. Genet.">
        <title>Mapping of the gene encoding a chicken homologue of the mammalian chemokine SCYA4.</title>
        <authorList>
            <person name="Hughes S.M."/>
            <person name="Bumstead N."/>
        </authorList>
    </citation>
    <scope>NUCLEOTIDE SEQUENCE [MRNA]</scope>
</reference>
<reference key="3">
    <citation type="submission" date="2005-01" db="EMBL/GenBank/DDBJ databases">
        <title>The chicken MIP-like chemokine cluster has a reduced repertoire compared to that of mammals.</title>
        <authorList>
            <person name="Hughes S.M."/>
        </authorList>
    </citation>
    <scope>NUCLEOTIDE SEQUENCE [GENOMIC DNA]</scope>
</reference>
<feature type="signal peptide" evidence="1">
    <location>
        <begin position="1"/>
        <end position="21"/>
    </location>
</feature>
<feature type="chain" id="PRO_0000005169" description="C-C motif chemokine 4 homolog">
    <location>
        <begin position="22"/>
        <end position="90"/>
    </location>
</feature>
<feature type="disulfide bond" evidence="1">
    <location>
        <begin position="32"/>
        <end position="56"/>
    </location>
</feature>
<feature type="disulfide bond" evidence="1">
    <location>
        <begin position="33"/>
        <end position="72"/>
    </location>
</feature>
<feature type="sequence conflict" description="In Ref. 2; AAA48747 and 3; CAB45103." evidence="2" ref="2 3">
    <original>L</original>
    <variation>M</variation>
    <location>
        <position position="87"/>
    </location>
</feature>
<protein>
    <recommendedName>
        <fullName>C-C motif chemokine 4 homolog</fullName>
    </recommendedName>
    <alternativeName>
        <fullName>Macrophage inflammatory protein 1-beta homolog</fullName>
        <shortName>MIP-1-beta</shortName>
    </alternativeName>
    <alternativeName>
        <fullName>Small-inducible cytokine A4 homolog</fullName>
    </alternativeName>
</protein>
<accession>Q90826</accession>
<accession>Q4KS31</accession>
<accession>Q910C9</accession>
<name>CCL4_CHICK</name>
<organism>
    <name type="scientific">Gallus gallus</name>
    <name type="common">Chicken</name>
    <dbReference type="NCBI Taxonomy" id="9031"/>
    <lineage>
        <taxon>Eukaryota</taxon>
        <taxon>Metazoa</taxon>
        <taxon>Chordata</taxon>
        <taxon>Craniata</taxon>
        <taxon>Vertebrata</taxon>
        <taxon>Euteleostomi</taxon>
        <taxon>Archelosauria</taxon>
        <taxon>Archosauria</taxon>
        <taxon>Dinosauria</taxon>
        <taxon>Saurischia</taxon>
        <taxon>Theropoda</taxon>
        <taxon>Coelurosauria</taxon>
        <taxon>Aves</taxon>
        <taxon>Neognathae</taxon>
        <taxon>Galloanserae</taxon>
        <taxon>Galliformes</taxon>
        <taxon>Phasianidae</taxon>
        <taxon>Phasianinae</taxon>
        <taxon>Gallus</taxon>
    </lineage>
</organism>
<proteinExistence type="inferred from homology"/>
<gene>
    <name type="primary">CCL4</name>
    <name type="synonym">SCYA4</name>
</gene>
<comment type="function">
    <text evidence="1">Monokine with inflammatory and chemokinetic properties.</text>
</comment>
<comment type="subunit">
    <text evidence="1">Homodimer.</text>
</comment>
<comment type="subcellular location">
    <subcellularLocation>
        <location>Secreted</location>
    </subcellularLocation>
</comment>
<comment type="similarity">
    <text evidence="2">Belongs to the intercrine beta (chemokine CC) family.</text>
</comment>
<dbReference type="EMBL" id="L34553">
    <property type="protein sequence ID" value="AAA48747.1"/>
    <property type="molecule type" value="mRNA"/>
</dbReference>
<dbReference type="EMBL" id="AJ243034">
    <property type="protein sequence ID" value="CAB45103.1"/>
    <property type="molecule type" value="mRNA"/>
</dbReference>
<dbReference type="EMBL" id="AY895166">
    <property type="protein sequence ID" value="AAX83390.1"/>
    <property type="molecule type" value="Genomic_DNA"/>
</dbReference>
<dbReference type="RefSeq" id="NP_001025531.2">
    <property type="nucleotide sequence ID" value="NM_001030360.2"/>
</dbReference>
<dbReference type="SMR" id="Q90826"/>
<dbReference type="FunCoup" id="Q90826">
    <property type="interactions" value="263"/>
</dbReference>
<dbReference type="STRING" id="9031.ENSGALP00000067768"/>
<dbReference type="Ensembl" id="ENSGALT00010071450.1">
    <property type="protein sequence ID" value="ENSGALP00010044140.1"/>
    <property type="gene ID" value="ENSGALG00010029562.1"/>
</dbReference>
<dbReference type="GeneID" id="395551"/>
<dbReference type="KEGG" id="gga:395551"/>
<dbReference type="VEuPathDB" id="HostDB:LOC395551"/>
<dbReference type="GeneTree" id="ENSGT01100000263482"/>
<dbReference type="HOGENOM" id="CLU_141716_4_2_1"/>
<dbReference type="InParanoid" id="Q90826"/>
<dbReference type="OMA" id="VAFINDY"/>
<dbReference type="OrthoDB" id="9447832at2759"/>
<dbReference type="Reactome" id="R-GGA-380108">
    <property type="pathway name" value="Chemokine receptors bind chemokines"/>
</dbReference>
<dbReference type="Reactome" id="R-GGA-416476">
    <property type="pathway name" value="G alpha (q) signalling events"/>
</dbReference>
<dbReference type="Reactome" id="R-GGA-418594">
    <property type="pathway name" value="G alpha (i) signalling events"/>
</dbReference>
<dbReference type="PRO" id="PR:Q90826"/>
<dbReference type="Proteomes" id="UP000000539">
    <property type="component" value="Chromosome 19"/>
</dbReference>
<dbReference type="Bgee" id="ENSGALG00000032717">
    <property type="expression patterns" value="Expressed in granulocyte and 10 other cell types or tissues"/>
</dbReference>
<dbReference type="GO" id="GO:0005615">
    <property type="term" value="C:extracellular space"/>
    <property type="evidence" value="ECO:0000318"/>
    <property type="project" value="GO_Central"/>
</dbReference>
<dbReference type="GO" id="GO:0048020">
    <property type="term" value="F:CCR chemokine receptor binding"/>
    <property type="evidence" value="ECO:0000318"/>
    <property type="project" value="GO_Central"/>
</dbReference>
<dbReference type="GO" id="GO:0008009">
    <property type="term" value="F:chemokine activity"/>
    <property type="evidence" value="ECO:0000318"/>
    <property type="project" value="GO_Central"/>
</dbReference>
<dbReference type="GO" id="GO:0061844">
    <property type="term" value="P:antimicrobial humoral immune response mediated by antimicrobial peptide"/>
    <property type="evidence" value="ECO:0000318"/>
    <property type="project" value="GO_Central"/>
</dbReference>
<dbReference type="GO" id="GO:0070098">
    <property type="term" value="P:chemokine-mediated signaling pathway"/>
    <property type="evidence" value="ECO:0000318"/>
    <property type="project" value="GO_Central"/>
</dbReference>
<dbReference type="GO" id="GO:0048245">
    <property type="term" value="P:eosinophil chemotaxis"/>
    <property type="evidence" value="ECO:0000318"/>
    <property type="project" value="GO_Central"/>
</dbReference>
<dbReference type="GO" id="GO:0006954">
    <property type="term" value="P:inflammatory response"/>
    <property type="evidence" value="ECO:0000318"/>
    <property type="project" value="GO_Central"/>
</dbReference>
<dbReference type="GO" id="GO:0030335">
    <property type="term" value="P:positive regulation of cell migration"/>
    <property type="evidence" value="ECO:0000318"/>
    <property type="project" value="GO_Central"/>
</dbReference>
<dbReference type="CDD" id="cd00272">
    <property type="entry name" value="Chemokine_CC"/>
    <property type="match status" value="1"/>
</dbReference>
<dbReference type="FunFam" id="2.40.50.40:FF:000002">
    <property type="entry name" value="C-C motif chemokine"/>
    <property type="match status" value="1"/>
</dbReference>
<dbReference type="Gene3D" id="2.40.50.40">
    <property type="match status" value="1"/>
</dbReference>
<dbReference type="InterPro" id="IPR039809">
    <property type="entry name" value="Chemokine_b/g/d"/>
</dbReference>
<dbReference type="InterPro" id="IPR000827">
    <property type="entry name" value="Chemokine_CC_CS"/>
</dbReference>
<dbReference type="InterPro" id="IPR001811">
    <property type="entry name" value="Chemokine_IL8-like_dom"/>
</dbReference>
<dbReference type="InterPro" id="IPR036048">
    <property type="entry name" value="Interleukin_8-like_sf"/>
</dbReference>
<dbReference type="PANTHER" id="PTHR12015:SF103">
    <property type="entry name" value="C-C MOTIF CHEMOKINE 4-RELATED"/>
    <property type="match status" value="1"/>
</dbReference>
<dbReference type="PANTHER" id="PTHR12015">
    <property type="entry name" value="SMALL INDUCIBLE CYTOKINE A"/>
    <property type="match status" value="1"/>
</dbReference>
<dbReference type="Pfam" id="PF00048">
    <property type="entry name" value="IL8"/>
    <property type="match status" value="1"/>
</dbReference>
<dbReference type="SMART" id="SM00199">
    <property type="entry name" value="SCY"/>
    <property type="match status" value="1"/>
</dbReference>
<dbReference type="SUPFAM" id="SSF54117">
    <property type="entry name" value="Interleukin 8-like chemokines"/>
    <property type="match status" value="1"/>
</dbReference>
<dbReference type="PROSITE" id="PS00472">
    <property type="entry name" value="SMALL_CYTOKINES_CC"/>
    <property type="match status" value="1"/>
</dbReference>
<keyword id="KW-0145">Chemotaxis</keyword>
<keyword id="KW-0202">Cytokine</keyword>
<keyword id="KW-1015">Disulfide bond</keyword>
<keyword id="KW-1185">Reference proteome</keyword>
<keyword id="KW-0964">Secreted</keyword>
<keyword id="KW-0732">Signal</keyword>
<evidence type="ECO:0000250" key="1"/>
<evidence type="ECO:0000305" key="2"/>
<sequence>MKVSVAALAVLLIAICYQTSAAPVGSDPPTSCCFTYISRQLPFSFVADYYETNSQCPHAGVVFITRKGREVCANPENDWVQDYMNKLELN</sequence>